<dbReference type="EMBL" id="AAFW02000145">
    <property type="protein sequence ID" value="EDN60680.1"/>
    <property type="molecule type" value="Genomic_DNA"/>
</dbReference>
<dbReference type="HOGENOM" id="CLU_024415_0_0_1"/>
<dbReference type="Proteomes" id="UP000007060">
    <property type="component" value="Unassembled WGS sequence"/>
</dbReference>
<dbReference type="GO" id="GO:0005743">
    <property type="term" value="C:mitochondrial inner membrane"/>
    <property type="evidence" value="ECO:0007669"/>
    <property type="project" value="UniProtKB-SubCell"/>
</dbReference>
<dbReference type="GO" id="GO:0045182">
    <property type="term" value="F:translation regulator activity"/>
    <property type="evidence" value="ECO:0007669"/>
    <property type="project" value="InterPro"/>
</dbReference>
<dbReference type="InterPro" id="IPR017207">
    <property type="entry name" value="Atp22"/>
</dbReference>
<dbReference type="PIRSF" id="PIRSF037437">
    <property type="entry name" value="Atp22"/>
    <property type="match status" value="1"/>
</dbReference>
<organism>
    <name type="scientific">Saccharomyces cerevisiae (strain YJM789)</name>
    <name type="common">Baker's yeast</name>
    <dbReference type="NCBI Taxonomy" id="307796"/>
    <lineage>
        <taxon>Eukaryota</taxon>
        <taxon>Fungi</taxon>
        <taxon>Dikarya</taxon>
        <taxon>Ascomycota</taxon>
        <taxon>Saccharomycotina</taxon>
        <taxon>Saccharomycetes</taxon>
        <taxon>Saccharomycetales</taxon>
        <taxon>Saccharomycetaceae</taxon>
        <taxon>Saccharomyces</taxon>
    </lineage>
</organism>
<sequence length="684" mass="79756">MLKCICRVYSQPLAQMVTSPLFKHMGSAGTYTILPITNLRHLSTKNCPLKIKSNRSEPLQFGDFERQVPCSRKSGSSKNVQKRLYELRQLKTVLSETFGVTEYASFFESLRNALHINNCSENEKKKLLYDIILHQHELYPEVARKIGFYLPGEVHRWFWYHIPKSESFNHYLFLLKSDVLLFTSNYCTRFTNRLIKGTEMERQLATFQIFLHDETNIKFIMEKVLKLHTFDSLIALVNGLVKAKNFRFIKVFIQALLQKLEQHCYSGKDGAKQKNLRYVKFNNTLLYYLLKSGNVELFIKTFQEELKFIVSSGLLNHIDGNEHILNFPIHHYLNLLRISNRQEELFNVISCLQSSPLMKYKLFKEFLMGELIASFQAFRDPKLVCKYLLSSYSSKASANILNALGIWGWLYHSKSTTLTAPTLARELKNKNNILPNTMRIGSPVTVPILTELYRSLLSSSSVSLESGQFKNCLLDLYYKYKSFLSEEAHKYRYWRNDTGILNVFLNYIRFQAREPRLAYNVLLDFYSQPFAKKVVLTTTLCPFSIVAYKNHTLTQAELSELLQVMHKNGVPLTFKFCSAMVMHYVKMRDEKGARSWYNKILFGGFEIRHMALIQIIKDQGWPFPKNFDETLLTELVENNNIKEPTDSTLFTDEDMFEEDGKPRFNDDDVNKCTNIIRETLKSLN</sequence>
<keyword id="KW-0472">Membrane</keyword>
<keyword id="KW-0496">Mitochondrion</keyword>
<keyword id="KW-0999">Mitochondrion inner membrane</keyword>
<keyword id="KW-0809">Transit peptide</keyword>
<keyword id="KW-0810">Translation regulation</keyword>
<reference key="1">
    <citation type="journal article" date="2007" name="Proc. Natl. Acad. Sci. U.S.A.">
        <title>Genome sequencing and comparative analysis of Saccharomyces cerevisiae strain YJM789.</title>
        <authorList>
            <person name="Wei W."/>
            <person name="McCusker J.H."/>
            <person name="Hyman R.W."/>
            <person name="Jones T."/>
            <person name="Ning Y."/>
            <person name="Cao Z."/>
            <person name="Gu Z."/>
            <person name="Bruno D."/>
            <person name="Miranda M."/>
            <person name="Nguyen M."/>
            <person name="Wilhelmy J."/>
            <person name="Komp C."/>
            <person name="Tamse R."/>
            <person name="Wang X."/>
            <person name="Jia P."/>
            <person name="Luedi P."/>
            <person name="Oefner P.J."/>
            <person name="David L."/>
            <person name="Dietrich F.S."/>
            <person name="Li Y."/>
            <person name="Davis R.W."/>
            <person name="Steinmetz L.M."/>
        </authorList>
    </citation>
    <scope>NUCLEOTIDE SEQUENCE [LARGE SCALE GENOMIC DNA]</scope>
    <source>
        <strain>YJM789</strain>
    </source>
</reference>
<comment type="function">
    <text evidence="1">Translation factor specific for subunit 6 of the mitochondrial ATPase. Required for assembly of the CF(0) component of the ATPase (By similarity).</text>
</comment>
<comment type="subcellular location">
    <subcellularLocation>
        <location evidence="1">Mitochondrion inner membrane</location>
        <topology evidence="1">Peripheral membrane protein</topology>
        <orientation evidence="1">Matrix side</orientation>
    </subcellularLocation>
</comment>
<comment type="similarity">
    <text evidence="3">Belongs to the ATP22 family.</text>
</comment>
<name>ATP22_YEAS7</name>
<gene>
    <name type="primary">ATP22</name>
    <name type="ORF">SCY_1238</name>
</gene>
<accession>A6ZYV0</accession>
<protein>
    <recommendedName>
        <fullName>Mitochondrial translation factor ATP22</fullName>
    </recommendedName>
</protein>
<evidence type="ECO:0000250" key="1"/>
<evidence type="ECO:0000255" key="2"/>
<evidence type="ECO:0000305" key="3"/>
<feature type="transit peptide" description="Mitochondrion" evidence="2">
    <location>
        <begin position="1"/>
        <end position="56"/>
    </location>
</feature>
<feature type="chain" id="PRO_0000330048" description="Mitochondrial translation factor ATP22">
    <location>
        <begin position="57"/>
        <end position="684"/>
    </location>
</feature>
<proteinExistence type="inferred from homology"/>